<reference key="1">
    <citation type="journal article" date="1992" name="Mol. Gen. Genet.">
        <title>Cloning of a superoxide dismutase gene from Listeria ivanovii by functional complementation in Escherichia coli and characterization of the gene product.</title>
        <authorList>
            <person name="Haas A."/>
            <person name="Goebel W."/>
        </authorList>
    </citation>
    <scope>NUCLEOTIDE SEQUENCE [GENOMIC DNA]</scope>
    <source>
        <strain>ATCC 19119 / DSM 20750 / BCRC 14844 / JCM 7681 / KCTC 3444 / NCTC 11846 / NRRL B-33017 / SLCC 2379 / WDCM 00018</strain>
    </source>
</reference>
<gene>
    <name type="primary">sodA</name>
    <name type="synonym">sod</name>
</gene>
<dbReference type="EC" id="1.15.1.1"/>
<dbReference type="EMBL" id="X64011">
    <property type="protein sequence ID" value="CAA45406.1"/>
    <property type="molecule type" value="Genomic_DNA"/>
</dbReference>
<dbReference type="PIR" id="S20019">
    <property type="entry name" value="S20019"/>
</dbReference>
<dbReference type="SMR" id="P28763"/>
<dbReference type="GO" id="GO:0005737">
    <property type="term" value="C:cytoplasm"/>
    <property type="evidence" value="ECO:0007669"/>
    <property type="project" value="TreeGrafter"/>
</dbReference>
<dbReference type="GO" id="GO:0046872">
    <property type="term" value="F:metal ion binding"/>
    <property type="evidence" value="ECO:0007669"/>
    <property type="project" value="UniProtKB-KW"/>
</dbReference>
<dbReference type="GO" id="GO:0004784">
    <property type="term" value="F:superoxide dismutase activity"/>
    <property type="evidence" value="ECO:0007669"/>
    <property type="project" value="UniProtKB-EC"/>
</dbReference>
<dbReference type="FunFam" id="1.10.287.990:FF:000001">
    <property type="entry name" value="Superoxide dismutase"/>
    <property type="match status" value="1"/>
</dbReference>
<dbReference type="FunFam" id="3.55.40.20:FF:000001">
    <property type="entry name" value="Superoxide dismutase"/>
    <property type="match status" value="1"/>
</dbReference>
<dbReference type="Gene3D" id="1.10.287.990">
    <property type="entry name" value="Fe,Mn superoxide dismutase (SOD) domain"/>
    <property type="match status" value="1"/>
</dbReference>
<dbReference type="Gene3D" id="3.55.40.20">
    <property type="entry name" value="Iron/manganese superoxide dismutase, C-terminal domain"/>
    <property type="match status" value="1"/>
</dbReference>
<dbReference type="InterPro" id="IPR001189">
    <property type="entry name" value="Mn/Fe_SOD"/>
</dbReference>
<dbReference type="InterPro" id="IPR019833">
    <property type="entry name" value="Mn/Fe_SOD_BS"/>
</dbReference>
<dbReference type="InterPro" id="IPR019832">
    <property type="entry name" value="Mn/Fe_SOD_C"/>
</dbReference>
<dbReference type="InterPro" id="IPR019831">
    <property type="entry name" value="Mn/Fe_SOD_N"/>
</dbReference>
<dbReference type="InterPro" id="IPR036324">
    <property type="entry name" value="Mn/Fe_SOD_N_sf"/>
</dbReference>
<dbReference type="InterPro" id="IPR036314">
    <property type="entry name" value="SOD_C_sf"/>
</dbReference>
<dbReference type="PANTHER" id="PTHR43595">
    <property type="entry name" value="37S RIBOSOMAL PROTEIN S26, MITOCHONDRIAL"/>
    <property type="match status" value="1"/>
</dbReference>
<dbReference type="PANTHER" id="PTHR43595:SF2">
    <property type="entry name" value="SMALL RIBOSOMAL SUBUNIT PROTEIN MS42"/>
    <property type="match status" value="1"/>
</dbReference>
<dbReference type="Pfam" id="PF02777">
    <property type="entry name" value="Sod_Fe_C"/>
    <property type="match status" value="1"/>
</dbReference>
<dbReference type="Pfam" id="PF00081">
    <property type="entry name" value="Sod_Fe_N"/>
    <property type="match status" value="1"/>
</dbReference>
<dbReference type="PIRSF" id="PIRSF000349">
    <property type="entry name" value="SODismutase"/>
    <property type="match status" value="1"/>
</dbReference>
<dbReference type="PRINTS" id="PR01703">
    <property type="entry name" value="MNSODISMTASE"/>
</dbReference>
<dbReference type="SUPFAM" id="SSF54719">
    <property type="entry name" value="Fe,Mn superoxide dismutase (SOD), C-terminal domain"/>
    <property type="match status" value="1"/>
</dbReference>
<dbReference type="SUPFAM" id="SSF46609">
    <property type="entry name" value="Fe,Mn superoxide dismutase (SOD), N-terminal domain"/>
    <property type="match status" value="1"/>
</dbReference>
<dbReference type="PROSITE" id="PS00088">
    <property type="entry name" value="SOD_MN"/>
    <property type="match status" value="1"/>
</dbReference>
<organism>
    <name type="scientific">Listeria ivanovii</name>
    <dbReference type="NCBI Taxonomy" id="1638"/>
    <lineage>
        <taxon>Bacteria</taxon>
        <taxon>Bacillati</taxon>
        <taxon>Bacillota</taxon>
        <taxon>Bacilli</taxon>
        <taxon>Bacillales</taxon>
        <taxon>Listeriaceae</taxon>
        <taxon>Listeria</taxon>
    </lineage>
</organism>
<accession>P28763</accession>
<protein>
    <recommendedName>
        <fullName>Superoxide dismutase [Mn]</fullName>
        <ecNumber>1.15.1.1</ecNumber>
    </recommendedName>
</protein>
<sequence length="202" mass="22671">MTYELPKLPYTYDALEPNFDKETMEIHYTKHHNIYVTKLNEAVSGHAELASKPGEELVANLDSVPEEIRGAVRNHGGGHANHTLFWSSLSPNGGGAPTGNLKAAIESEFGTFDEFKEKFNAAAAARFGSGWAWLVVNNGKLEIVSTANQDSPLSEGKTPVLGLDVWEHAYYLKFQNRRPEYIDTFWNVINWDERNKRFDAAK</sequence>
<comment type="function">
    <text>Destroys superoxide anion radicals which are normally produced within the cells and which are toxic to biological systems.</text>
</comment>
<comment type="catalytic activity">
    <reaction>
        <text>2 superoxide + 2 H(+) = H2O2 + O2</text>
        <dbReference type="Rhea" id="RHEA:20696"/>
        <dbReference type="ChEBI" id="CHEBI:15378"/>
        <dbReference type="ChEBI" id="CHEBI:15379"/>
        <dbReference type="ChEBI" id="CHEBI:16240"/>
        <dbReference type="ChEBI" id="CHEBI:18421"/>
        <dbReference type="EC" id="1.15.1.1"/>
    </reaction>
</comment>
<comment type="cofactor">
    <cofactor evidence="1">
        <name>Mn(2+)</name>
        <dbReference type="ChEBI" id="CHEBI:29035"/>
    </cofactor>
    <text evidence="1">Binds 1 Mn(2+) ion per subunit.</text>
</comment>
<comment type="subunit">
    <text evidence="1">Homodimer.</text>
</comment>
<comment type="similarity">
    <text evidence="2">Belongs to the iron/manganese superoxide dismutase family.</text>
</comment>
<keyword id="KW-0464">Manganese</keyword>
<keyword id="KW-0479">Metal-binding</keyword>
<keyword id="KW-0560">Oxidoreductase</keyword>
<evidence type="ECO:0000250" key="1"/>
<evidence type="ECO:0000305" key="2"/>
<name>SODM_LISIV</name>
<proteinExistence type="inferred from homology"/>
<feature type="chain" id="PRO_0000160043" description="Superoxide dismutase [Mn]">
    <location>
        <begin position="1"/>
        <end position="202"/>
    </location>
</feature>
<feature type="binding site" evidence="1">
    <location>
        <position position="27"/>
    </location>
    <ligand>
        <name>Mn(2+)</name>
        <dbReference type="ChEBI" id="CHEBI:29035"/>
    </ligand>
</feature>
<feature type="binding site" evidence="1">
    <location>
        <position position="82"/>
    </location>
    <ligand>
        <name>Mn(2+)</name>
        <dbReference type="ChEBI" id="CHEBI:29035"/>
    </ligand>
</feature>
<feature type="binding site" evidence="1">
    <location>
        <position position="164"/>
    </location>
    <ligand>
        <name>Mn(2+)</name>
        <dbReference type="ChEBI" id="CHEBI:29035"/>
    </ligand>
</feature>
<feature type="binding site" evidence="1">
    <location>
        <position position="168"/>
    </location>
    <ligand>
        <name>Mn(2+)</name>
        <dbReference type="ChEBI" id="CHEBI:29035"/>
    </ligand>
</feature>